<comment type="similarity">
    <text evidence="1">Belongs to the bacterial ribosomal protein bL34 family.</text>
</comment>
<dbReference type="EMBL" id="FM200053">
    <property type="protein sequence ID" value="CAR61713.1"/>
    <property type="molecule type" value="Genomic_DNA"/>
</dbReference>
<dbReference type="RefSeq" id="WP_000831330.1">
    <property type="nucleotide sequence ID" value="NC_011147.1"/>
</dbReference>
<dbReference type="SMR" id="B5BIL5"/>
<dbReference type="GeneID" id="98190980"/>
<dbReference type="KEGG" id="sek:SSPA3438"/>
<dbReference type="HOGENOM" id="CLU_129938_2_1_6"/>
<dbReference type="Proteomes" id="UP000001869">
    <property type="component" value="Chromosome"/>
</dbReference>
<dbReference type="GO" id="GO:1990904">
    <property type="term" value="C:ribonucleoprotein complex"/>
    <property type="evidence" value="ECO:0007669"/>
    <property type="project" value="UniProtKB-KW"/>
</dbReference>
<dbReference type="GO" id="GO:0005840">
    <property type="term" value="C:ribosome"/>
    <property type="evidence" value="ECO:0007669"/>
    <property type="project" value="UniProtKB-KW"/>
</dbReference>
<dbReference type="GO" id="GO:0003735">
    <property type="term" value="F:structural constituent of ribosome"/>
    <property type="evidence" value="ECO:0007669"/>
    <property type="project" value="InterPro"/>
</dbReference>
<dbReference type="GO" id="GO:0006412">
    <property type="term" value="P:translation"/>
    <property type="evidence" value="ECO:0007669"/>
    <property type="project" value="UniProtKB-UniRule"/>
</dbReference>
<dbReference type="FunFam" id="1.10.287.3980:FF:000001">
    <property type="entry name" value="Mitochondrial ribosomal protein L34"/>
    <property type="match status" value="1"/>
</dbReference>
<dbReference type="Gene3D" id="1.10.287.3980">
    <property type="match status" value="1"/>
</dbReference>
<dbReference type="HAMAP" id="MF_00391">
    <property type="entry name" value="Ribosomal_bL34"/>
    <property type="match status" value="1"/>
</dbReference>
<dbReference type="InterPro" id="IPR000271">
    <property type="entry name" value="Ribosomal_bL34"/>
</dbReference>
<dbReference type="InterPro" id="IPR020939">
    <property type="entry name" value="Ribosomal_bL34_CS"/>
</dbReference>
<dbReference type="NCBIfam" id="TIGR01030">
    <property type="entry name" value="rpmH_bact"/>
    <property type="match status" value="1"/>
</dbReference>
<dbReference type="PANTHER" id="PTHR14503:SF4">
    <property type="entry name" value="LARGE RIBOSOMAL SUBUNIT PROTEIN BL34M"/>
    <property type="match status" value="1"/>
</dbReference>
<dbReference type="PANTHER" id="PTHR14503">
    <property type="entry name" value="MITOCHONDRIAL RIBOSOMAL PROTEIN 34 FAMILY MEMBER"/>
    <property type="match status" value="1"/>
</dbReference>
<dbReference type="Pfam" id="PF00468">
    <property type="entry name" value="Ribosomal_L34"/>
    <property type="match status" value="1"/>
</dbReference>
<dbReference type="PROSITE" id="PS00784">
    <property type="entry name" value="RIBOSOMAL_L34"/>
    <property type="match status" value="1"/>
</dbReference>
<name>RL34_SALPK</name>
<evidence type="ECO:0000255" key="1">
    <source>
        <dbReference type="HAMAP-Rule" id="MF_00391"/>
    </source>
</evidence>
<evidence type="ECO:0000305" key="2"/>
<organism>
    <name type="scientific">Salmonella paratyphi A (strain AKU_12601)</name>
    <dbReference type="NCBI Taxonomy" id="554290"/>
    <lineage>
        <taxon>Bacteria</taxon>
        <taxon>Pseudomonadati</taxon>
        <taxon>Pseudomonadota</taxon>
        <taxon>Gammaproteobacteria</taxon>
        <taxon>Enterobacterales</taxon>
        <taxon>Enterobacteriaceae</taxon>
        <taxon>Salmonella</taxon>
    </lineage>
</organism>
<proteinExistence type="inferred from homology"/>
<sequence>MKRTFQPSVLKRNRSHGFRARMATKNGRQVLARRRAKGRARLTVSK</sequence>
<protein>
    <recommendedName>
        <fullName evidence="1">Large ribosomal subunit protein bL34</fullName>
    </recommendedName>
    <alternativeName>
        <fullName evidence="2">50S ribosomal protein L34</fullName>
    </alternativeName>
</protein>
<reference key="1">
    <citation type="journal article" date="2009" name="BMC Genomics">
        <title>Pseudogene accumulation in the evolutionary histories of Salmonella enterica serovars Paratyphi A and Typhi.</title>
        <authorList>
            <person name="Holt K.E."/>
            <person name="Thomson N.R."/>
            <person name="Wain J."/>
            <person name="Langridge G.C."/>
            <person name="Hasan R."/>
            <person name="Bhutta Z.A."/>
            <person name="Quail M.A."/>
            <person name="Norbertczak H."/>
            <person name="Walker D."/>
            <person name="Simmonds M."/>
            <person name="White B."/>
            <person name="Bason N."/>
            <person name="Mungall K."/>
            <person name="Dougan G."/>
            <person name="Parkhill J."/>
        </authorList>
    </citation>
    <scope>NUCLEOTIDE SEQUENCE [LARGE SCALE GENOMIC DNA]</scope>
    <source>
        <strain>AKU_12601</strain>
    </source>
</reference>
<accession>B5BIL5</accession>
<gene>
    <name evidence="1" type="primary">rpmH</name>
    <name type="ordered locus">SSPA3438</name>
</gene>
<keyword id="KW-0687">Ribonucleoprotein</keyword>
<keyword id="KW-0689">Ribosomal protein</keyword>
<feature type="chain" id="PRO_1000196105" description="Large ribosomal subunit protein bL34">
    <location>
        <begin position="1"/>
        <end position="46"/>
    </location>
</feature>